<feature type="chain" id="PRO_1000199578" description="Threonine--tRNA ligase">
    <location>
        <begin position="1"/>
        <end position="609"/>
    </location>
</feature>
<feature type="region of interest" description="Editing domain" evidence="1">
    <location>
        <begin position="1"/>
        <end position="145"/>
    </location>
</feature>
<feature type="region of interest" description="Catalytic" evidence="1">
    <location>
        <begin position="194"/>
        <end position="485"/>
    </location>
</feature>
<feature type="binding site" evidence="1">
    <location>
        <position position="286"/>
    </location>
    <ligand>
        <name>Zn(2+)</name>
        <dbReference type="ChEBI" id="CHEBI:29105"/>
    </ligand>
</feature>
<feature type="binding site" evidence="1">
    <location>
        <position position="338"/>
    </location>
    <ligand>
        <name>Zn(2+)</name>
        <dbReference type="ChEBI" id="CHEBI:29105"/>
    </ligand>
</feature>
<feature type="binding site" evidence="1">
    <location>
        <position position="458"/>
    </location>
    <ligand>
        <name>Zn(2+)</name>
        <dbReference type="ChEBI" id="CHEBI:29105"/>
    </ligand>
</feature>
<gene>
    <name evidence="1" type="primary">thrS</name>
    <name type="ordered locus">Mpal_1303</name>
</gene>
<sequence length="609" mass="69051">MRLLLIHSDYIEYEAQKKTKMAEADPVPKDGMTEALTVFTAVEAVDEEDIDDVVAQSVAEIEKTATQLAVKNLLIYPYAHLSSDLSSPEAAVAALSAIERRLNETGRYEVKRAPFGWYKKFKLSCKGHPLSELSKTIVPGAGAAVKEKKEVTHEFFVMTPDGERHETGEFLEGRFGALVKKEIGIAEPVGGEPIHVDLMRSKELVDYEPASDVGNLRWLPRGKIVRDLLADYVLHMVLEYGGSPVETPVMYDLGDKAIYEHADKFGERQYRFKSGNRNMMLRFAACFGMFSIMRDMHISPNTLPIKMYELSTYSFRHEQRGEVIGLKRLRAFTMPDMHSLCLDMEGALHCFEEQLRLGWKSGEDFETELVGVFRCTRGFYEKYENWVKSIVAESRVPMLIEILSDRVHYWIAKVDLAAIDGQGRPIENPTVQIDVESSTRFDIKYHLDGEVVHPPILHCSPTGSIERVICALLENTANQSVPQLPAWLAPTQVRLIPVAERHTSFADELCTRLNKAQIRTDLDDREESVGKKVREAGMDWVPYVIVIGDAEMETGKLTVTIRKLSEPRVPHKEQLDVEELITLVRTSTDGMPFRPLYTTRNLSKKPRYI</sequence>
<comment type="function">
    <text evidence="1">Catalyzes the attachment of threonine to tRNA(Thr) in a two-step reaction: L-threonine is first activated by ATP to form Thr-AMP and then transferred to the acceptor end of tRNA(Thr). Also edits incorrectly charged L-seryl-tRNA(Thr).</text>
</comment>
<comment type="catalytic activity">
    <reaction evidence="1">
        <text>tRNA(Thr) + L-threonine + ATP = L-threonyl-tRNA(Thr) + AMP + diphosphate + H(+)</text>
        <dbReference type="Rhea" id="RHEA:24624"/>
        <dbReference type="Rhea" id="RHEA-COMP:9670"/>
        <dbReference type="Rhea" id="RHEA-COMP:9704"/>
        <dbReference type="ChEBI" id="CHEBI:15378"/>
        <dbReference type="ChEBI" id="CHEBI:30616"/>
        <dbReference type="ChEBI" id="CHEBI:33019"/>
        <dbReference type="ChEBI" id="CHEBI:57926"/>
        <dbReference type="ChEBI" id="CHEBI:78442"/>
        <dbReference type="ChEBI" id="CHEBI:78534"/>
        <dbReference type="ChEBI" id="CHEBI:456215"/>
        <dbReference type="EC" id="6.1.1.3"/>
    </reaction>
</comment>
<comment type="cofactor">
    <cofactor evidence="1">
        <name>Zn(2+)</name>
        <dbReference type="ChEBI" id="CHEBI:29105"/>
    </cofactor>
    <text evidence="1">Binds 1 zinc ion per subunit.</text>
</comment>
<comment type="subunit">
    <text evidence="1">Homodimer.</text>
</comment>
<comment type="subcellular location">
    <subcellularLocation>
        <location evidence="1">Cytoplasm</location>
    </subcellularLocation>
</comment>
<comment type="domain">
    <text evidence="1">The N-terminal domain is an archaea-specific tRNA-editing domain that hydrolyzes incorrectly charged L-seryl-tRNA(Thr). Catalysis of tRNA editing is performed by the charged tRNA itself.</text>
</comment>
<comment type="similarity">
    <text evidence="1">Belongs to the class-II aminoacyl-tRNA synthetase family.</text>
</comment>
<organism>
    <name type="scientific">Methanosphaerula palustris (strain ATCC BAA-1556 / DSM 19958 / E1-9c)</name>
    <dbReference type="NCBI Taxonomy" id="521011"/>
    <lineage>
        <taxon>Archaea</taxon>
        <taxon>Methanobacteriati</taxon>
        <taxon>Methanobacteriota</taxon>
        <taxon>Stenosarchaea group</taxon>
        <taxon>Methanomicrobia</taxon>
        <taxon>Methanomicrobiales</taxon>
        <taxon>Methanoregulaceae</taxon>
        <taxon>Methanosphaerula</taxon>
    </lineage>
</organism>
<keyword id="KW-0030">Aminoacyl-tRNA synthetase</keyword>
<keyword id="KW-0067">ATP-binding</keyword>
<keyword id="KW-0963">Cytoplasm</keyword>
<keyword id="KW-0436">Ligase</keyword>
<keyword id="KW-0479">Metal-binding</keyword>
<keyword id="KW-0547">Nucleotide-binding</keyword>
<keyword id="KW-0648">Protein biosynthesis</keyword>
<keyword id="KW-1185">Reference proteome</keyword>
<keyword id="KW-0694">RNA-binding</keyword>
<keyword id="KW-0820">tRNA-binding</keyword>
<keyword id="KW-0862">Zinc</keyword>
<dbReference type="EC" id="6.1.1.3" evidence="1"/>
<dbReference type="EMBL" id="CP001338">
    <property type="protein sequence ID" value="ACL16637.1"/>
    <property type="molecule type" value="Genomic_DNA"/>
</dbReference>
<dbReference type="RefSeq" id="WP_012617956.1">
    <property type="nucleotide sequence ID" value="NC_011832.1"/>
</dbReference>
<dbReference type="SMR" id="B8GHN2"/>
<dbReference type="STRING" id="521011.Mpal_1303"/>
<dbReference type="GeneID" id="7271163"/>
<dbReference type="KEGG" id="mpl:Mpal_1303"/>
<dbReference type="eggNOG" id="arCOG00401">
    <property type="taxonomic scope" value="Archaea"/>
</dbReference>
<dbReference type="HOGENOM" id="CLU_029833_0_0_2"/>
<dbReference type="OrthoDB" id="372136at2157"/>
<dbReference type="Proteomes" id="UP000002457">
    <property type="component" value="Chromosome"/>
</dbReference>
<dbReference type="GO" id="GO:0005737">
    <property type="term" value="C:cytoplasm"/>
    <property type="evidence" value="ECO:0007669"/>
    <property type="project" value="UniProtKB-SubCell"/>
</dbReference>
<dbReference type="GO" id="GO:0005524">
    <property type="term" value="F:ATP binding"/>
    <property type="evidence" value="ECO:0007669"/>
    <property type="project" value="UniProtKB-UniRule"/>
</dbReference>
<dbReference type="GO" id="GO:0004829">
    <property type="term" value="F:threonine-tRNA ligase activity"/>
    <property type="evidence" value="ECO:0007669"/>
    <property type="project" value="UniProtKB-UniRule"/>
</dbReference>
<dbReference type="GO" id="GO:0000049">
    <property type="term" value="F:tRNA binding"/>
    <property type="evidence" value="ECO:0007669"/>
    <property type="project" value="UniProtKB-KW"/>
</dbReference>
<dbReference type="GO" id="GO:0008270">
    <property type="term" value="F:zinc ion binding"/>
    <property type="evidence" value="ECO:0007669"/>
    <property type="project" value="InterPro"/>
</dbReference>
<dbReference type="GO" id="GO:0006435">
    <property type="term" value="P:threonyl-tRNA aminoacylation"/>
    <property type="evidence" value="ECO:0007669"/>
    <property type="project" value="UniProtKB-UniRule"/>
</dbReference>
<dbReference type="CDD" id="cd00860">
    <property type="entry name" value="ThrRS_anticodon"/>
    <property type="match status" value="1"/>
</dbReference>
<dbReference type="FunFam" id="3.40.50.800:FF:000001">
    <property type="entry name" value="Threonine--tRNA ligase"/>
    <property type="match status" value="1"/>
</dbReference>
<dbReference type="Gene3D" id="3.40.50.800">
    <property type="entry name" value="Anticodon-binding domain"/>
    <property type="match status" value="1"/>
</dbReference>
<dbReference type="Gene3D" id="3.30.930.10">
    <property type="entry name" value="Bira Bifunctional Protein, Domain 2"/>
    <property type="match status" value="1"/>
</dbReference>
<dbReference type="Gene3D" id="3.50.80.10">
    <property type="entry name" value="D-tyrosyl-tRNA(Tyr) deacylase"/>
    <property type="match status" value="1"/>
</dbReference>
<dbReference type="HAMAP" id="MF_00184">
    <property type="entry name" value="Thr_tRNA_synth"/>
    <property type="match status" value="1"/>
</dbReference>
<dbReference type="InterPro" id="IPR002314">
    <property type="entry name" value="aa-tRNA-synt_IIb"/>
</dbReference>
<dbReference type="InterPro" id="IPR006195">
    <property type="entry name" value="aa-tRNA-synth_II"/>
</dbReference>
<dbReference type="InterPro" id="IPR045864">
    <property type="entry name" value="aa-tRNA-synth_II/BPL/LPL"/>
</dbReference>
<dbReference type="InterPro" id="IPR004154">
    <property type="entry name" value="Anticodon-bd"/>
</dbReference>
<dbReference type="InterPro" id="IPR036621">
    <property type="entry name" value="Anticodon-bd_dom_sf"/>
</dbReference>
<dbReference type="InterPro" id="IPR023509">
    <property type="entry name" value="DTD-like_sf"/>
</dbReference>
<dbReference type="InterPro" id="IPR002320">
    <property type="entry name" value="Thr-tRNA-ligase_IIa"/>
</dbReference>
<dbReference type="InterPro" id="IPR015011">
    <property type="entry name" value="Threonyl-tRNA_syn_edit_dom_arc"/>
</dbReference>
<dbReference type="InterPro" id="IPR047246">
    <property type="entry name" value="ThrRS_anticodon"/>
</dbReference>
<dbReference type="NCBIfam" id="NF003068">
    <property type="entry name" value="PRK03991.1"/>
    <property type="match status" value="1"/>
</dbReference>
<dbReference type="NCBIfam" id="TIGR00418">
    <property type="entry name" value="thrS"/>
    <property type="match status" value="1"/>
</dbReference>
<dbReference type="PANTHER" id="PTHR11451:SF44">
    <property type="entry name" value="THREONINE--TRNA LIGASE, CHLOROPLASTIC_MITOCHONDRIAL 2"/>
    <property type="match status" value="1"/>
</dbReference>
<dbReference type="PANTHER" id="PTHR11451">
    <property type="entry name" value="THREONINE-TRNA LIGASE"/>
    <property type="match status" value="1"/>
</dbReference>
<dbReference type="Pfam" id="PF03129">
    <property type="entry name" value="HGTP_anticodon"/>
    <property type="match status" value="1"/>
</dbReference>
<dbReference type="Pfam" id="PF00587">
    <property type="entry name" value="tRNA-synt_2b"/>
    <property type="match status" value="1"/>
</dbReference>
<dbReference type="Pfam" id="PF08915">
    <property type="entry name" value="tRNA-Thr_ED"/>
    <property type="match status" value="1"/>
</dbReference>
<dbReference type="PRINTS" id="PR01047">
    <property type="entry name" value="TRNASYNTHTHR"/>
</dbReference>
<dbReference type="SUPFAM" id="SSF52954">
    <property type="entry name" value="Class II aaRS ABD-related"/>
    <property type="match status" value="1"/>
</dbReference>
<dbReference type="SUPFAM" id="SSF55681">
    <property type="entry name" value="Class II aaRS and biotin synthetases"/>
    <property type="match status" value="1"/>
</dbReference>
<dbReference type="PROSITE" id="PS50862">
    <property type="entry name" value="AA_TRNA_LIGASE_II"/>
    <property type="match status" value="1"/>
</dbReference>
<reference key="1">
    <citation type="journal article" date="2015" name="Genome Announc.">
        <title>Complete Genome Sequence of Methanosphaerula palustris E1-9CT, a Hydrogenotrophic Methanogen Isolated from a Minerotrophic Fen Peatland.</title>
        <authorList>
            <person name="Cadillo-Quiroz H."/>
            <person name="Browne P."/>
            <person name="Kyrpides N."/>
            <person name="Woyke T."/>
            <person name="Goodwin L."/>
            <person name="Detter C."/>
            <person name="Yavitt J.B."/>
            <person name="Zinder S.H."/>
        </authorList>
    </citation>
    <scope>NUCLEOTIDE SEQUENCE [LARGE SCALE GENOMIC DNA]</scope>
    <source>
        <strain>ATCC BAA-1556 / DSM 19958 / E1-9c</strain>
    </source>
</reference>
<proteinExistence type="inferred from homology"/>
<evidence type="ECO:0000255" key="1">
    <source>
        <dbReference type="HAMAP-Rule" id="MF_00184"/>
    </source>
</evidence>
<accession>B8GHN2</accession>
<protein>
    <recommendedName>
        <fullName evidence="1">Threonine--tRNA ligase</fullName>
        <ecNumber evidence="1">6.1.1.3</ecNumber>
    </recommendedName>
    <alternativeName>
        <fullName evidence="1">Threonyl-tRNA synthetase</fullName>
        <shortName evidence="1">ThrRS</shortName>
    </alternativeName>
</protein>
<name>SYT_METPE</name>